<reference key="1">
    <citation type="journal article" date="2001" name="Nature">
        <title>Genome sequence of Yersinia pestis, the causative agent of plague.</title>
        <authorList>
            <person name="Parkhill J."/>
            <person name="Wren B.W."/>
            <person name="Thomson N.R."/>
            <person name="Titball R.W."/>
            <person name="Holden M.T.G."/>
            <person name="Prentice M.B."/>
            <person name="Sebaihia M."/>
            <person name="James K.D."/>
            <person name="Churcher C.M."/>
            <person name="Mungall K.L."/>
            <person name="Baker S."/>
            <person name="Basham D."/>
            <person name="Bentley S.D."/>
            <person name="Brooks K."/>
            <person name="Cerdeno-Tarraga A.-M."/>
            <person name="Chillingworth T."/>
            <person name="Cronin A."/>
            <person name="Davies R.M."/>
            <person name="Davis P."/>
            <person name="Dougan G."/>
            <person name="Feltwell T."/>
            <person name="Hamlin N."/>
            <person name="Holroyd S."/>
            <person name="Jagels K."/>
            <person name="Karlyshev A.V."/>
            <person name="Leather S."/>
            <person name="Moule S."/>
            <person name="Oyston P.C.F."/>
            <person name="Quail M.A."/>
            <person name="Rutherford K.M."/>
            <person name="Simmonds M."/>
            <person name="Skelton J."/>
            <person name="Stevens K."/>
            <person name="Whitehead S."/>
            <person name="Barrell B.G."/>
        </authorList>
    </citation>
    <scope>NUCLEOTIDE SEQUENCE [LARGE SCALE GENOMIC DNA]</scope>
    <source>
        <strain>CO-92 / Biovar Orientalis</strain>
    </source>
</reference>
<reference key="2">
    <citation type="journal article" date="2002" name="J. Bacteriol.">
        <title>Genome sequence of Yersinia pestis KIM.</title>
        <authorList>
            <person name="Deng W."/>
            <person name="Burland V."/>
            <person name="Plunkett G. III"/>
            <person name="Boutin A."/>
            <person name="Mayhew G.F."/>
            <person name="Liss P."/>
            <person name="Perna N.T."/>
            <person name="Rose D.J."/>
            <person name="Mau B."/>
            <person name="Zhou S."/>
            <person name="Schwartz D.C."/>
            <person name="Fetherston J.D."/>
            <person name="Lindler L.E."/>
            <person name="Brubaker R.R."/>
            <person name="Plano G.V."/>
            <person name="Straley S.C."/>
            <person name="McDonough K.A."/>
            <person name="Nilles M.L."/>
            <person name="Matson J.S."/>
            <person name="Blattner F.R."/>
            <person name="Perry R.D."/>
        </authorList>
    </citation>
    <scope>NUCLEOTIDE SEQUENCE [LARGE SCALE GENOMIC DNA]</scope>
    <source>
        <strain>KIM10+ / Biovar Mediaevalis</strain>
    </source>
</reference>
<reference key="3">
    <citation type="journal article" date="2004" name="DNA Res.">
        <title>Complete genome sequence of Yersinia pestis strain 91001, an isolate avirulent to humans.</title>
        <authorList>
            <person name="Song Y."/>
            <person name="Tong Z."/>
            <person name="Wang J."/>
            <person name="Wang L."/>
            <person name="Guo Z."/>
            <person name="Han Y."/>
            <person name="Zhang J."/>
            <person name="Pei D."/>
            <person name="Zhou D."/>
            <person name="Qin H."/>
            <person name="Pang X."/>
            <person name="Han Y."/>
            <person name="Zhai J."/>
            <person name="Li M."/>
            <person name="Cui B."/>
            <person name="Qi Z."/>
            <person name="Jin L."/>
            <person name="Dai R."/>
            <person name="Chen F."/>
            <person name="Li S."/>
            <person name="Ye C."/>
            <person name="Du Z."/>
            <person name="Lin W."/>
            <person name="Wang J."/>
            <person name="Yu J."/>
            <person name="Yang H."/>
            <person name="Wang J."/>
            <person name="Huang P."/>
            <person name="Yang R."/>
        </authorList>
    </citation>
    <scope>NUCLEOTIDE SEQUENCE [LARGE SCALE GENOMIC DNA]</scope>
    <source>
        <strain>91001 / Biovar Mediaevalis</strain>
    </source>
</reference>
<accession>P58722</accession>
<accession>Q0WKG0</accession>
<feature type="chain" id="PRO_0000215018" description="Putative membrane protein IgaA homolog">
    <location>
        <begin position="1"/>
        <end position="715"/>
    </location>
</feature>
<feature type="transmembrane region" description="Helical" evidence="2">
    <location>
        <begin position="2"/>
        <end position="22"/>
    </location>
</feature>
<feature type="transmembrane region" description="Helical" evidence="2">
    <location>
        <begin position="214"/>
        <end position="234"/>
    </location>
</feature>
<feature type="transmembrane region" description="Helical" evidence="2">
    <location>
        <begin position="235"/>
        <end position="255"/>
    </location>
</feature>
<feature type="transmembrane region" description="Helical" evidence="2">
    <location>
        <begin position="349"/>
        <end position="369"/>
    </location>
</feature>
<feature type="transmembrane region" description="Helical" evidence="2">
    <location>
        <begin position="663"/>
        <end position="683"/>
    </location>
</feature>
<organism>
    <name type="scientific">Yersinia pestis</name>
    <dbReference type="NCBI Taxonomy" id="632"/>
    <lineage>
        <taxon>Bacteria</taxon>
        <taxon>Pseudomonadati</taxon>
        <taxon>Pseudomonadota</taxon>
        <taxon>Gammaproteobacteria</taxon>
        <taxon>Enterobacterales</taxon>
        <taxon>Yersiniaceae</taxon>
        <taxon>Yersinia</taxon>
    </lineage>
</organism>
<sequence>MSTIVLILALLLTSLIAVGLLWWLRFRRPHPITAALPFVKLTHRKLTPEERVSIENYLRNQQNKHGFNTQPAFDSHALAASTSSTPMLVLTPQSDNVYSVTRAITRYGVASDEPNKWRYYLDSIEVHLPSAWEQYITQDNDVELIQTQTIPLVISLNGHTLNNHQSENTYQPILPSVSKNASIRKEDSEHIELLNIRKETPEEYALHGPNGLKEACAICIALLLLFFALSGPTVTLPWLVIVAVSLTCWACWYLFRPLSEKDLREVHCLNGTPKRWGLFGESNQGQINNISLGIVDLIYPAHWGPYFVHDLGKKTHIDIYLNRQVVRQGAFLSLHDEMKMFPLQRWGKNLTLIVGSLLVLVLLLIYVPLGLPLKLSVAWLQGAQSQQVTSVAALDKMPLRIGDMLKAQGNGMCYVPPNIQNTRGFVFTPFDCSGIYWNTASPLPQPESETIEKAAALVETINKQLHPQGSDASVNPKLATAIEKSGMILLDDFSDIVLKTQALCSENTDCIRLKNALVNLGNAKNWSALVKRAQSGNLEGMNVLLRPISADVLENLINTAASSFVYRETHLATEALNSPPPGGFLITSDEGKQLVNHPAPTLPLFDYSALEQWRELQRLSALLLDTPFKAEGIITNITTDANGTRHIALHSEPDIVTLGRYLATSLLLLVLIFCLVVNMVLLIQRAMKNRRRMDNIQRYYDDCFNQTLTPPPFLR</sequence>
<dbReference type="EMBL" id="AL590842">
    <property type="protein sequence ID" value="CAL18828.1"/>
    <property type="molecule type" value="Genomic_DNA"/>
</dbReference>
<dbReference type="EMBL" id="AE009952">
    <property type="protein sequence ID" value="AAM87466.1"/>
    <property type="molecule type" value="Genomic_DNA"/>
</dbReference>
<dbReference type="EMBL" id="AE017042">
    <property type="protein sequence ID" value="AAS60421.1"/>
    <property type="molecule type" value="Genomic_DNA"/>
</dbReference>
<dbReference type="PIR" id="AC0018">
    <property type="entry name" value="AC0018"/>
</dbReference>
<dbReference type="RefSeq" id="WP_002208908.1">
    <property type="nucleotide sequence ID" value="NZ_WUCM01000004.1"/>
</dbReference>
<dbReference type="RefSeq" id="YP_002345228.1">
    <property type="nucleotide sequence ID" value="NC_003143.1"/>
</dbReference>
<dbReference type="SMR" id="P58722"/>
<dbReference type="IntAct" id="P58722">
    <property type="interactions" value="1"/>
</dbReference>
<dbReference type="STRING" id="214092.YPO0142"/>
<dbReference type="PaxDb" id="214092-YPO0142"/>
<dbReference type="DNASU" id="1148869"/>
<dbReference type="EnsemblBacteria" id="AAS60421">
    <property type="protein sequence ID" value="AAS60421"/>
    <property type="gene ID" value="YP_0143"/>
</dbReference>
<dbReference type="KEGG" id="ype:YPO0142"/>
<dbReference type="KEGG" id="ypk:y3922"/>
<dbReference type="KEGG" id="ypm:YP_0143"/>
<dbReference type="PATRIC" id="fig|214092.21.peg.370"/>
<dbReference type="eggNOG" id="ENOG502Z8KK">
    <property type="taxonomic scope" value="Bacteria"/>
</dbReference>
<dbReference type="HOGENOM" id="CLU_014723_0_0_6"/>
<dbReference type="OMA" id="LIYPPHW"/>
<dbReference type="OrthoDB" id="8827178at2"/>
<dbReference type="Proteomes" id="UP000000815">
    <property type="component" value="Chromosome"/>
</dbReference>
<dbReference type="Proteomes" id="UP000001019">
    <property type="component" value="Chromosome"/>
</dbReference>
<dbReference type="Proteomes" id="UP000002490">
    <property type="component" value="Chromosome"/>
</dbReference>
<dbReference type="GO" id="GO:0005886">
    <property type="term" value="C:plasma membrane"/>
    <property type="evidence" value="ECO:0007669"/>
    <property type="project" value="UniProtKB-SubCell"/>
</dbReference>
<dbReference type="InterPro" id="IPR010771">
    <property type="entry name" value="IgaA"/>
</dbReference>
<dbReference type="Pfam" id="PF07095">
    <property type="entry name" value="IgaA"/>
    <property type="match status" value="1"/>
</dbReference>
<protein>
    <recommendedName>
        <fullName>Putative membrane protein IgaA homolog</fullName>
    </recommendedName>
</protein>
<name>IGAA_YERPE</name>
<comment type="subcellular location">
    <subcellularLocation>
        <location evidence="1">Cell inner membrane</location>
        <topology evidence="1">Multi-pass membrane protein</topology>
    </subcellularLocation>
</comment>
<comment type="similarity">
    <text evidence="3">Belongs to the IgaA family.</text>
</comment>
<evidence type="ECO:0000250" key="1"/>
<evidence type="ECO:0000255" key="2"/>
<evidence type="ECO:0000305" key="3"/>
<gene>
    <name type="ordered locus">YPO0142</name>
    <name type="ordered locus">y3922</name>
    <name type="ordered locus">YP_0143</name>
</gene>
<keyword id="KW-0997">Cell inner membrane</keyword>
<keyword id="KW-1003">Cell membrane</keyword>
<keyword id="KW-0472">Membrane</keyword>
<keyword id="KW-1185">Reference proteome</keyword>
<keyword id="KW-0812">Transmembrane</keyword>
<keyword id="KW-1133">Transmembrane helix</keyword>
<proteinExistence type="inferred from homology"/>